<name>LPXD_NEIMB</name>
<reference key="1">
    <citation type="journal article" date="1997" name="Gene">
        <title>Isolation and characterization of the Neisseria meningitidis lpxD-fabZ-lpxA gene cluster involved in lipid A biosynthesis.</title>
        <authorList>
            <person name="Steeghs L."/>
            <person name="Jennings M.P."/>
            <person name="Poolman J.T."/>
            <person name="Der Ley P."/>
        </authorList>
    </citation>
    <scope>NUCLEOTIDE SEQUENCE [GENOMIC DNA]</scope>
    <source>
        <strain>ATCC BAA-335 / MC58</strain>
    </source>
</reference>
<reference key="2">
    <citation type="journal article" date="2000" name="Science">
        <title>Complete genome sequence of Neisseria meningitidis serogroup B strain MC58.</title>
        <authorList>
            <person name="Tettelin H."/>
            <person name="Saunders N.J."/>
            <person name="Heidelberg J.F."/>
            <person name="Jeffries A.C."/>
            <person name="Nelson K.E."/>
            <person name="Eisen J.A."/>
            <person name="Ketchum K.A."/>
            <person name="Hood D.W."/>
            <person name="Peden J.F."/>
            <person name="Dodson R.J."/>
            <person name="Nelson W.C."/>
            <person name="Gwinn M.L."/>
            <person name="DeBoy R.T."/>
            <person name="Peterson J.D."/>
            <person name="Hickey E.K."/>
            <person name="Haft D.H."/>
            <person name="Salzberg S.L."/>
            <person name="White O."/>
            <person name="Fleischmann R.D."/>
            <person name="Dougherty B.A."/>
            <person name="Mason T.M."/>
            <person name="Ciecko A."/>
            <person name="Parksey D.S."/>
            <person name="Blair E."/>
            <person name="Cittone H."/>
            <person name="Clark E.B."/>
            <person name="Cotton M.D."/>
            <person name="Utterback T.R."/>
            <person name="Khouri H.M."/>
            <person name="Qin H."/>
            <person name="Vamathevan J.J."/>
            <person name="Gill J."/>
            <person name="Scarlato V."/>
            <person name="Masignani V."/>
            <person name="Pizza M."/>
            <person name="Grandi G."/>
            <person name="Sun L."/>
            <person name="Smith H.O."/>
            <person name="Fraser C.M."/>
            <person name="Moxon E.R."/>
            <person name="Rappuoli R."/>
            <person name="Venter J.C."/>
        </authorList>
    </citation>
    <scope>NUCLEOTIDE SEQUENCE [LARGE SCALE GENOMIC DNA]</scope>
    <source>
        <strain>ATCC BAA-335 / MC58</strain>
    </source>
</reference>
<organism>
    <name type="scientific">Neisseria meningitidis serogroup B (strain ATCC BAA-335 / MC58)</name>
    <dbReference type="NCBI Taxonomy" id="122586"/>
    <lineage>
        <taxon>Bacteria</taxon>
        <taxon>Pseudomonadati</taxon>
        <taxon>Pseudomonadota</taxon>
        <taxon>Betaproteobacteria</taxon>
        <taxon>Neisseriales</taxon>
        <taxon>Neisseriaceae</taxon>
        <taxon>Neisseria</taxon>
    </lineage>
</organism>
<sequence length="348" mass="36449">MIPATYTLSQITARLGGEWRGEDISVTAVRPLADAQAEHISFLANPKYKAEVHDSSAGAVIVSAKAADGFEGRNLIVADDPYLYFAKVARLFSPVVKARGGIHPTAVVEPGATVPTSCEIGANVYIGANTVLGEGCRILANAVVQHDCKLGDEVVLHPNAVVYYGCTLGRRVEIHSGAVIGADGFGLAFADDSWFKIPQTGAVTLGDDVEIGSNTNIDRGAMSDTTVGNGTKIDNQVQIGHNCKIGSHTVIAAKTGISGSVTIGSYCIIGGGVGTVGHIEIADKTTIGGGTSVTHSITESGKHLAGIFPMSTHKEWARNAVYIHRLSEMNKRLKTLEQQLSDAGQDSK</sequence>
<proteinExistence type="inferred from homology"/>
<protein>
    <recommendedName>
        <fullName evidence="1">UDP-3-O-acylglucosamine N-acyltransferase</fullName>
        <ecNumber evidence="1">2.3.1.191</ecNumber>
    </recommendedName>
</protein>
<dbReference type="EC" id="2.3.1.191" evidence="1"/>
<dbReference type="EMBL" id="U79481">
    <property type="protein sequence ID" value="AAC45422.1"/>
    <property type="molecule type" value="Genomic_DNA"/>
</dbReference>
<dbReference type="EMBL" id="AE002098">
    <property type="protein sequence ID" value="AAF40637.1"/>
    <property type="molecule type" value="Genomic_DNA"/>
</dbReference>
<dbReference type="PIR" id="E81228">
    <property type="entry name" value="E81228"/>
</dbReference>
<dbReference type="RefSeq" id="NP_273238.1">
    <property type="nucleotide sequence ID" value="NC_003112.2"/>
</dbReference>
<dbReference type="RefSeq" id="WP_002243946.1">
    <property type="nucleotide sequence ID" value="NC_003112.2"/>
</dbReference>
<dbReference type="SMR" id="P95377"/>
<dbReference type="FunCoup" id="P95377">
    <property type="interactions" value="369"/>
</dbReference>
<dbReference type="STRING" id="122586.NMB0180"/>
<dbReference type="PaxDb" id="122586-NMB0180"/>
<dbReference type="KEGG" id="nme:NMB0180"/>
<dbReference type="PATRIC" id="fig|122586.8.peg.222"/>
<dbReference type="HOGENOM" id="CLU_049865_0_1_4"/>
<dbReference type="InParanoid" id="P95377"/>
<dbReference type="OrthoDB" id="9784739at2"/>
<dbReference type="BRENDA" id="2.3.1.191">
    <property type="organism ID" value="3593"/>
</dbReference>
<dbReference type="UniPathway" id="UPA00973"/>
<dbReference type="Proteomes" id="UP000000425">
    <property type="component" value="Chromosome"/>
</dbReference>
<dbReference type="GO" id="GO:0016020">
    <property type="term" value="C:membrane"/>
    <property type="evidence" value="ECO:0007669"/>
    <property type="project" value="GOC"/>
</dbReference>
<dbReference type="GO" id="GO:0016410">
    <property type="term" value="F:N-acyltransferase activity"/>
    <property type="evidence" value="ECO:0007669"/>
    <property type="project" value="InterPro"/>
</dbReference>
<dbReference type="GO" id="GO:0009245">
    <property type="term" value="P:lipid A biosynthetic process"/>
    <property type="evidence" value="ECO:0007669"/>
    <property type="project" value="UniProtKB-UniRule"/>
</dbReference>
<dbReference type="CDD" id="cd03352">
    <property type="entry name" value="LbH_LpxD"/>
    <property type="match status" value="1"/>
</dbReference>
<dbReference type="Gene3D" id="1.20.5.170">
    <property type="match status" value="1"/>
</dbReference>
<dbReference type="Gene3D" id="2.160.10.10">
    <property type="entry name" value="Hexapeptide repeat proteins"/>
    <property type="match status" value="1"/>
</dbReference>
<dbReference type="Gene3D" id="3.40.1390.10">
    <property type="entry name" value="MurE/MurF, N-terminal domain"/>
    <property type="match status" value="1"/>
</dbReference>
<dbReference type="HAMAP" id="MF_00523">
    <property type="entry name" value="LpxD"/>
    <property type="match status" value="1"/>
</dbReference>
<dbReference type="InterPro" id="IPR001451">
    <property type="entry name" value="Hexapep"/>
</dbReference>
<dbReference type="InterPro" id="IPR018357">
    <property type="entry name" value="Hexapep_transf_CS"/>
</dbReference>
<dbReference type="InterPro" id="IPR007691">
    <property type="entry name" value="LpxD"/>
</dbReference>
<dbReference type="InterPro" id="IPR011004">
    <property type="entry name" value="Trimer_LpxA-like_sf"/>
</dbReference>
<dbReference type="InterPro" id="IPR020573">
    <property type="entry name" value="UDP_GlcNAc_AcTrfase_non-rep"/>
</dbReference>
<dbReference type="NCBIfam" id="TIGR01853">
    <property type="entry name" value="lipid_A_lpxD"/>
    <property type="match status" value="1"/>
</dbReference>
<dbReference type="NCBIfam" id="NF002060">
    <property type="entry name" value="PRK00892.1"/>
    <property type="match status" value="1"/>
</dbReference>
<dbReference type="PANTHER" id="PTHR43378">
    <property type="entry name" value="UDP-3-O-ACYLGLUCOSAMINE N-ACYLTRANSFERASE"/>
    <property type="match status" value="1"/>
</dbReference>
<dbReference type="PANTHER" id="PTHR43378:SF2">
    <property type="entry name" value="UDP-3-O-ACYLGLUCOSAMINE N-ACYLTRANSFERASE 1, MITOCHONDRIAL-RELATED"/>
    <property type="match status" value="1"/>
</dbReference>
<dbReference type="Pfam" id="PF00132">
    <property type="entry name" value="Hexapep"/>
    <property type="match status" value="2"/>
</dbReference>
<dbReference type="Pfam" id="PF04613">
    <property type="entry name" value="LpxD"/>
    <property type="match status" value="1"/>
</dbReference>
<dbReference type="SUPFAM" id="SSF51161">
    <property type="entry name" value="Trimeric LpxA-like enzymes"/>
    <property type="match status" value="1"/>
</dbReference>
<dbReference type="PROSITE" id="PS00101">
    <property type="entry name" value="HEXAPEP_TRANSFERASES"/>
    <property type="match status" value="1"/>
</dbReference>
<evidence type="ECO:0000255" key="1">
    <source>
        <dbReference type="HAMAP-Rule" id="MF_00523"/>
    </source>
</evidence>
<evidence type="ECO:0000305" key="2"/>
<gene>
    <name evidence="1" type="primary">lpxD</name>
    <name type="ordered locus">NMB0180</name>
</gene>
<accession>P95377</accession>
<accession>Q9K1H2</accession>
<keyword id="KW-0012">Acyltransferase</keyword>
<keyword id="KW-0441">Lipid A biosynthesis</keyword>
<keyword id="KW-0444">Lipid biosynthesis</keyword>
<keyword id="KW-0443">Lipid metabolism</keyword>
<keyword id="KW-1185">Reference proteome</keyword>
<keyword id="KW-0677">Repeat</keyword>
<keyword id="KW-0808">Transferase</keyword>
<feature type="chain" id="PRO_0000059684" description="UDP-3-O-acylglucosamine N-acyltransferase">
    <location>
        <begin position="1"/>
        <end position="348"/>
    </location>
</feature>
<feature type="active site" description="Proton acceptor" evidence="1">
    <location>
        <position position="241"/>
    </location>
</feature>
<feature type="sequence conflict" description="In Ref. 2; AAC45422." evidence="2" ref="2">
    <original>MIP</original>
    <variation>VAV</variation>
    <location>
        <begin position="1"/>
        <end position="3"/>
    </location>
</feature>
<comment type="function">
    <text evidence="1">Catalyzes the N-acylation of UDP-3-O-acylglucosamine using 3-hydroxyacyl-ACP as the acyl donor. Is involved in the biosynthesis of lipid A, a phosphorylated glycolipid that anchors the lipopolysaccharide to the outer membrane of the cell.</text>
</comment>
<comment type="catalytic activity">
    <reaction evidence="1">
        <text>a UDP-3-O-[(3R)-3-hydroxyacyl]-alpha-D-glucosamine + a (3R)-hydroxyacyl-[ACP] = a UDP-2-N,3-O-bis[(3R)-3-hydroxyacyl]-alpha-D-glucosamine + holo-[ACP] + H(+)</text>
        <dbReference type="Rhea" id="RHEA:53836"/>
        <dbReference type="Rhea" id="RHEA-COMP:9685"/>
        <dbReference type="Rhea" id="RHEA-COMP:9945"/>
        <dbReference type="ChEBI" id="CHEBI:15378"/>
        <dbReference type="ChEBI" id="CHEBI:64479"/>
        <dbReference type="ChEBI" id="CHEBI:78827"/>
        <dbReference type="ChEBI" id="CHEBI:137740"/>
        <dbReference type="ChEBI" id="CHEBI:137748"/>
        <dbReference type="EC" id="2.3.1.191"/>
    </reaction>
</comment>
<comment type="pathway">
    <text evidence="1">Bacterial outer membrane biogenesis; LPS lipid A biosynthesis.</text>
</comment>
<comment type="subunit">
    <text evidence="1">Homotrimer.</text>
</comment>
<comment type="similarity">
    <text evidence="1">Belongs to the transferase hexapeptide repeat family. LpxD subfamily.</text>
</comment>